<keyword id="KW-0687">Ribonucleoprotein</keyword>
<keyword id="KW-0689">Ribosomal protein</keyword>
<keyword id="KW-0694">RNA-binding</keyword>
<keyword id="KW-0699">rRNA-binding</keyword>
<keyword id="KW-0820">tRNA-binding</keyword>
<proteinExistence type="inferred from homology"/>
<evidence type="ECO:0000255" key="1">
    <source>
        <dbReference type="HAMAP-Rule" id="MF_01333"/>
    </source>
</evidence>
<evidence type="ECO:0000305" key="2"/>
<comment type="function">
    <text evidence="1">This is one of the proteins that bind and probably mediate the attachment of the 5S RNA into the large ribosomal subunit, where it forms part of the central protuberance. In the 70S ribosome it contacts protein S13 of the 30S subunit (bridge B1b), connecting the 2 subunits; this bridge is implicated in subunit movement. Contacts the P site tRNA; the 5S rRNA and some of its associated proteins might help stabilize positioning of ribosome-bound tRNAs.</text>
</comment>
<comment type="subunit">
    <text evidence="1">Part of the 50S ribosomal subunit; part of the 5S rRNA/L5/L18/L25 subcomplex. Contacts the 5S rRNA and the P site tRNA. Forms a bridge to the 30S subunit in the 70S ribosome.</text>
</comment>
<comment type="similarity">
    <text evidence="1">Belongs to the universal ribosomal protein uL5 family.</text>
</comment>
<organism>
    <name type="scientific">Klebsiella pneumoniae subsp. pneumoniae (strain ATCC 700721 / MGH 78578)</name>
    <dbReference type="NCBI Taxonomy" id="272620"/>
    <lineage>
        <taxon>Bacteria</taxon>
        <taxon>Pseudomonadati</taxon>
        <taxon>Pseudomonadota</taxon>
        <taxon>Gammaproteobacteria</taxon>
        <taxon>Enterobacterales</taxon>
        <taxon>Enterobacteriaceae</taxon>
        <taxon>Klebsiella/Raoultella group</taxon>
        <taxon>Klebsiella</taxon>
        <taxon>Klebsiella pneumoniae complex</taxon>
    </lineage>
</organism>
<reference key="1">
    <citation type="submission" date="2006-09" db="EMBL/GenBank/DDBJ databases">
        <authorList>
            <consortium name="The Klebsiella pneumonia Genome Sequencing Project"/>
            <person name="McClelland M."/>
            <person name="Sanderson E.K."/>
            <person name="Spieth J."/>
            <person name="Clifton W.S."/>
            <person name="Latreille P."/>
            <person name="Sabo A."/>
            <person name="Pepin K."/>
            <person name="Bhonagiri V."/>
            <person name="Porwollik S."/>
            <person name="Ali J."/>
            <person name="Wilson R.K."/>
        </authorList>
    </citation>
    <scope>NUCLEOTIDE SEQUENCE [LARGE SCALE GENOMIC DNA]</scope>
    <source>
        <strain>ATCC 700721 / MGH 78578</strain>
    </source>
</reference>
<protein>
    <recommendedName>
        <fullName evidence="1">Large ribosomal subunit protein uL5</fullName>
    </recommendedName>
    <alternativeName>
        <fullName evidence="2">50S ribosomal protein L5</fullName>
    </alternativeName>
</protein>
<gene>
    <name evidence="1" type="primary">rplE</name>
    <name type="ordered locus">KPN78578_36700</name>
    <name type="ORF">KPN_03707</name>
</gene>
<accession>A6TEW0</accession>
<sequence length="179" mass="20302">MAKLHDYYKDEVVKKLMTEFNYNSVMQVPRVEKITLNMGVGEAIADKKLLDNAAADLAAISGQKPLITKARKSVAGFKIRQGYPIGCKVTLRGERMWEFFERLITIAVPRIRDFRGLSAKSFDGRGNYSMGVREQIIFPEIDYDKVDRVRGLDITITTTAKSDEEGRALLAAFDFPFRK</sequence>
<name>RL5_KLEP7</name>
<feature type="chain" id="PRO_1000052751" description="Large ribosomal subunit protein uL5">
    <location>
        <begin position="1"/>
        <end position="179"/>
    </location>
</feature>
<dbReference type="EMBL" id="CP000647">
    <property type="protein sequence ID" value="ABR79094.1"/>
    <property type="molecule type" value="Genomic_DNA"/>
</dbReference>
<dbReference type="RefSeq" id="WP_001096200.1">
    <property type="nucleotide sequence ID" value="NC_009648.1"/>
</dbReference>
<dbReference type="SMR" id="A6TEW0"/>
<dbReference type="STRING" id="272620.KPN_03707"/>
<dbReference type="jPOST" id="A6TEW0"/>
<dbReference type="PaxDb" id="272620-KPN_03707"/>
<dbReference type="EnsemblBacteria" id="ABR79094">
    <property type="protein sequence ID" value="ABR79094"/>
    <property type="gene ID" value="KPN_03707"/>
</dbReference>
<dbReference type="GeneID" id="93778679"/>
<dbReference type="KEGG" id="kpn:KPN_03707"/>
<dbReference type="HOGENOM" id="CLU_061015_2_1_6"/>
<dbReference type="Proteomes" id="UP000000265">
    <property type="component" value="Chromosome"/>
</dbReference>
<dbReference type="GO" id="GO:1990904">
    <property type="term" value="C:ribonucleoprotein complex"/>
    <property type="evidence" value="ECO:0007669"/>
    <property type="project" value="UniProtKB-KW"/>
</dbReference>
<dbReference type="GO" id="GO:0005840">
    <property type="term" value="C:ribosome"/>
    <property type="evidence" value="ECO:0007669"/>
    <property type="project" value="UniProtKB-KW"/>
</dbReference>
<dbReference type="GO" id="GO:0019843">
    <property type="term" value="F:rRNA binding"/>
    <property type="evidence" value="ECO:0007669"/>
    <property type="project" value="UniProtKB-UniRule"/>
</dbReference>
<dbReference type="GO" id="GO:0003735">
    <property type="term" value="F:structural constituent of ribosome"/>
    <property type="evidence" value="ECO:0007669"/>
    <property type="project" value="InterPro"/>
</dbReference>
<dbReference type="GO" id="GO:0000049">
    <property type="term" value="F:tRNA binding"/>
    <property type="evidence" value="ECO:0007669"/>
    <property type="project" value="UniProtKB-UniRule"/>
</dbReference>
<dbReference type="GO" id="GO:0006412">
    <property type="term" value="P:translation"/>
    <property type="evidence" value="ECO:0007669"/>
    <property type="project" value="UniProtKB-UniRule"/>
</dbReference>
<dbReference type="FunFam" id="3.30.1440.10:FF:000001">
    <property type="entry name" value="50S ribosomal protein L5"/>
    <property type="match status" value="1"/>
</dbReference>
<dbReference type="Gene3D" id="3.30.1440.10">
    <property type="match status" value="1"/>
</dbReference>
<dbReference type="HAMAP" id="MF_01333_B">
    <property type="entry name" value="Ribosomal_uL5_B"/>
    <property type="match status" value="1"/>
</dbReference>
<dbReference type="InterPro" id="IPR002132">
    <property type="entry name" value="Ribosomal_uL5"/>
</dbReference>
<dbReference type="InterPro" id="IPR020930">
    <property type="entry name" value="Ribosomal_uL5_bac-type"/>
</dbReference>
<dbReference type="InterPro" id="IPR031309">
    <property type="entry name" value="Ribosomal_uL5_C"/>
</dbReference>
<dbReference type="InterPro" id="IPR020929">
    <property type="entry name" value="Ribosomal_uL5_CS"/>
</dbReference>
<dbReference type="InterPro" id="IPR022803">
    <property type="entry name" value="Ribosomal_uL5_dom_sf"/>
</dbReference>
<dbReference type="InterPro" id="IPR031310">
    <property type="entry name" value="Ribosomal_uL5_N"/>
</dbReference>
<dbReference type="NCBIfam" id="NF000585">
    <property type="entry name" value="PRK00010.1"/>
    <property type="match status" value="1"/>
</dbReference>
<dbReference type="PANTHER" id="PTHR11994">
    <property type="entry name" value="60S RIBOSOMAL PROTEIN L11-RELATED"/>
    <property type="match status" value="1"/>
</dbReference>
<dbReference type="Pfam" id="PF00281">
    <property type="entry name" value="Ribosomal_L5"/>
    <property type="match status" value="1"/>
</dbReference>
<dbReference type="Pfam" id="PF00673">
    <property type="entry name" value="Ribosomal_L5_C"/>
    <property type="match status" value="1"/>
</dbReference>
<dbReference type="PIRSF" id="PIRSF002161">
    <property type="entry name" value="Ribosomal_L5"/>
    <property type="match status" value="1"/>
</dbReference>
<dbReference type="SUPFAM" id="SSF55282">
    <property type="entry name" value="RL5-like"/>
    <property type="match status" value="1"/>
</dbReference>
<dbReference type="PROSITE" id="PS00358">
    <property type="entry name" value="RIBOSOMAL_L5"/>
    <property type="match status" value="1"/>
</dbReference>